<name>RPOS_SHIFL</name>
<proteinExistence type="inferred from homology"/>
<dbReference type="EMBL" id="U00119">
    <property type="protein sequence ID" value="AAA03294.1"/>
    <property type="status" value="ALT_INIT"/>
    <property type="molecule type" value="Unassigned_DNA"/>
</dbReference>
<dbReference type="EMBL" id="AE005674">
    <property type="protein sequence ID" value="AAN44253.1"/>
    <property type="status" value="ALT_INIT"/>
    <property type="molecule type" value="Genomic_DNA"/>
</dbReference>
<dbReference type="EMBL" id="AE014073">
    <property type="status" value="NOT_ANNOTATED_CDS"/>
    <property type="molecule type" value="Genomic_DNA"/>
</dbReference>
<dbReference type="RefSeq" id="NP_708546.1">
    <property type="nucleotide sequence ID" value="NC_004337.2"/>
</dbReference>
<dbReference type="RefSeq" id="WP_000081553.1">
    <property type="nucleotide sequence ID" value="NZ_WPGW01000039.1"/>
</dbReference>
<dbReference type="SMR" id="P35540"/>
<dbReference type="STRING" id="198214.SF2764"/>
<dbReference type="PaxDb" id="198214-SF2764"/>
<dbReference type="GeneID" id="1027440"/>
<dbReference type="KEGG" id="sfl:SF2764"/>
<dbReference type="PATRIC" id="fig|198214.7.peg.3290"/>
<dbReference type="HOGENOM" id="CLU_014793_3_5_6"/>
<dbReference type="Proteomes" id="UP000001006">
    <property type="component" value="Chromosome"/>
</dbReference>
<dbReference type="Proteomes" id="UP000002673">
    <property type="component" value="Chromosome"/>
</dbReference>
<dbReference type="GO" id="GO:0005737">
    <property type="term" value="C:cytoplasm"/>
    <property type="evidence" value="ECO:0007669"/>
    <property type="project" value="UniProtKB-SubCell"/>
</dbReference>
<dbReference type="GO" id="GO:0003677">
    <property type="term" value="F:DNA binding"/>
    <property type="evidence" value="ECO:0007669"/>
    <property type="project" value="UniProtKB-UniRule"/>
</dbReference>
<dbReference type="GO" id="GO:0016987">
    <property type="term" value="F:sigma factor activity"/>
    <property type="evidence" value="ECO:0007669"/>
    <property type="project" value="UniProtKB-UniRule"/>
</dbReference>
<dbReference type="GO" id="GO:0006352">
    <property type="term" value="P:DNA-templated transcription initiation"/>
    <property type="evidence" value="ECO:0007669"/>
    <property type="project" value="UniProtKB-UniRule"/>
</dbReference>
<dbReference type="CDD" id="cd06171">
    <property type="entry name" value="Sigma70_r4"/>
    <property type="match status" value="1"/>
</dbReference>
<dbReference type="FunFam" id="1.10.10.10:FF:000044">
    <property type="entry name" value="RNA polymerase sigma factor RpoS"/>
    <property type="match status" value="1"/>
</dbReference>
<dbReference type="FunFam" id="1.10.10.10:FF:000046">
    <property type="entry name" value="RNA polymerase sigma factor RpoS"/>
    <property type="match status" value="1"/>
</dbReference>
<dbReference type="FunFam" id="1.10.601.10:FF:000001">
    <property type="entry name" value="RNA polymerase sigma factor SigA"/>
    <property type="match status" value="1"/>
</dbReference>
<dbReference type="Gene3D" id="1.10.601.10">
    <property type="entry name" value="RNA Polymerase Primary Sigma Factor"/>
    <property type="match status" value="1"/>
</dbReference>
<dbReference type="Gene3D" id="1.10.10.10">
    <property type="entry name" value="Winged helix-like DNA-binding domain superfamily/Winged helix DNA-binding domain"/>
    <property type="match status" value="2"/>
</dbReference>
<dbReference type="HAMAP" id="MF_00959">
    <property type="entry name" value="Sigma70_RpoS"/>
    <property type="match status" value="1"/>
</dbReference>
<dbReference type="InterPro" id="IPR014284">
    <property type="entry name" value="RNA_pol_sigma-70_dom"/>
</dbReference>
<dbReference type="InterPro" id="IPR000943">
    <property type="entry name" value="RNA_pol_sigma70"/>
</dbReference>
<dbReference type="InterPro" id="IPR009042">
    <property type="entry name" value="RNA_pol_sigma70_r1_2"/>
</dbReference>
<dbReference type="InterPro" id="IPR007627">
    <property type="entry name" value="RNA_pol_sigma70_r2"/>
</dbReference>
<dbReference type="InterPro" id="IPR007624">
    <property type="entry name" value="RNA_pol_sigma70_r3"/>
</dbReference>
<dbReference type="InterPro" id="IPR007630">
    <property type="entry name" value="RNA_pol_sigma70_r4"/>
</dbReference>
<dbReference type="InterPro" id="IPR013325">
    <property type="entry name" value="RNA_pol_sigma_r2"/>
</dbReference>
<dbReference type="InterPro" id="IPR013324">
    <property type="entry name" value="RNA_pol_sigma_r3/r4-like"/>
</dbReference>
<dbReference type="InterPro" id="IPR012761">
    <property type="entry name" value="RNA_pol_sigma_RpoS"/>
</dbReference>
<dbReference type="InterPro" id="IPR050239">
    <property type="entry name" value="Sigma-70_RNA_pol_init_factors"/>
</dbReference>
<dbReference type="InterPro" id="IPR036388">
    <property type="entry name" value="WH-like_DNA-bd_sf"/>
</dbReference>
<dbReference type="NCBIfam" id="NF004207">
    <property type="entry name" value="PRK05657.1"/>
    <property type="match status" value="1"/>
</dbReference>
<dbReference type="NCBIfam" id="TIGR02394">
    <property type="entry name" value="rpoS_proteo"/>
    <property type="match status" value="1"/>
</dbReference>
<dbReference type="NCBIfam" id="TIGR02937">
    <property type="entry name" value="sigma70-ECF"/>
    <property type="match status" value="1"/>
</dbReference>
<dbReference type="PANTHER" id="PTHR30603">
    <property type="entry name" value="RNA POLYMERASE SIGMA FACTOR RPO"/>
    <property type="match status" value="1"/>
</dbReference>
<dbReference type="PANTHER" id="PTHR30603:SF67">
    <property type="entry name" value="RNA POLYMERASE SIGMA FACTOR RPOS"/>
    <property type="match status" value="1"/>
</dbReference>
<dbReference type="Pfam" id="PF00140">
    <property type="entry name" value="Sigma70_r1_2"/>
    <property type="match status" value="1"/>
</dbReference>
<dbReference type="Pfam" id="PF04542">
    <property type="entry name" value="Sigma70_r2"/>
    <property type="match status" value="1"/>
</dbReference>
<dbReference type="Pfam" id="PF04539">
    <property type="entry name" value="Sigma70_r3"/>
    <property type="match status" value="1"/>
</dbReference>
<dbReference type="Pfam" id="PF04545">
    <property type="entry name" value="Sigma70_r4"/>
    <property type="match status" value="1"/>
</dbReference>
<dbReference type="PRINTS" id="PR00046">
    <property type="entry name" value="SIGMA70FCT"/>
</dbReference>
<dbReference type="SUPFAM" id="SSF88946">
    <property type="entry name" value="Sigma2 domain of RNA polymerase sigma factors"/>
    <property type="match status" value="1"/>
</dbReference>
<dbReference type="SUPFAM" id="SSF88659">
    <property type="entry name" value="Sigma3 and sigma4 domains of RNA polymerase sigma factors"/>
    <property type="match status" value="2"/>
</dbReference>
<dbReference type="PROSITE" id="PS00715">
    <property type="entry name" value="SIGMA70_1"/>
    <property type="match status" value="1"/>
</dbReference>
<dbReference type="PROSITE" id="PS00716">
    <property type="entry name" value="SIGMA70_2"/>
    <property type="match status" value="1"/>
</dbReference>
<feature type="chain" id="PRO_0000093974" description="RNA polymerase sigma factor RpoS">
    <location>
        <begin position="1"/>
        <end position="330"/>
    </location>
</feature>
<feature type="DNA-binding region" description="H-T-H motif" evidence="1">
    <location>
        <begin position="288"/>
        <end position="307"/>
    </location>
</feature>
<feature type="region of interest" description="Sigma-70 factor domain-1" evidence="1">
    <location>
        <begin position="56"/>
        <end position="89"/>
    </location>
</feature>
<feature type="region of interest" description="Sigma-70 factor domain-2" evidence="1">
    <location>
        <begin position="94"/>
        <end position="164"/>
    </location>
</feature>
<feature type="region of interest" description="Sigma-70 factor domain-3" evidence="1">
    <location>
        <begin position="174"/>
        <end position="249"/>
    </location>
</feature>
<feature type="region of interest" description="Sigma-70 factor domain-4" evidence="1">
    <location>
        <begin position="262"/>
        <end position="315"/>
    </location>
</feature>
<feature type="short sequence motif" description="Interaction with polymerase core subunit RpoC">
    <location>
        <begin position="118"/>
        <end position="121"/>
    </location>
</feature>
<feature type="sequence conflict" description="In Ref. 1; AAA03294." evidence="2" ref="1">
    <original>L</original>
    <variation>I</variation>
    <location>
        <position position="11"/>
    </location>
</feature>
<feature type="sequence conflict" description="In Ref. 1; AAA03294." evidence="2" ref="1">
    <original>A</original>
    <variation>P</variation>
    <location>
        <position position="29"/>
    </location>
</feature>
<feature type="sequence conflict" description="In Ref. 1; AAA03294." evidence="2" ref="1">
    <original>D</original>
    <variation>Y</variation>
    <location>
        <position position="39"/>
    </location>
</feature>
<feature type="sequence conflict" description="In Ref. 1; AAA03294." evidence="2" ref="1">
    <original>R</original>
    <variation>L</variation>
    <location>
        <position position="53"/>
    </location>
</feature>
<feature type="sequence conflict" description="In Ref. 1; AAA03294." evidence="2" ref="1">
    <original>E</original>
    <variation>K</variation>
    <location>
        <position position="64"/>
    </location>
</feature>
<feature type="sequence conflict" description="In Ref. 1; AAA03294." evidence="2" ref="1">
    <original>A</original>
    <variation>V</variation>
    <location>
        <position position="182"/>
    </location>
</feature>
<feature type="sequence conflict" description="In Ref. 1; AAA03294." evidence="2" ref="1">
    <original>H</original>
    <variation>Y</variation>
    <location>
        <position position="191"/>
    </location>
</feature>
<feature type="sequence conflict" description="In Ref. 1; AAA03294." evidence="2" ref="1">
    <original>E</original>
    <variation>V</variation>
    <location>
        <position position="196"/>
    </location>
</feature>
<feature type="sequence conflict" description="In Ref. 1; AAA03294." evidence="2" ref="1">
    <original>L</original>
    <variation>I</variation>
    <location>
        <position position="274"/>
    </location>
</feature>
<feature type="sequence conflict" description="In Ref. 1; AAA03294." evidence="2" ref="1">
    <original>E</original>
    <variation>Q</variation>
    <location>
        <position position="308"/>
    </location>
</feature>
<feature type="sequence conflict" description="In Ref. 1." evidence="2" ref="1">
    <original>FRK</original>
    <variation>LPRVSKDLSERPLSSEAGFFCAQ</variation>
    <location>
        <begin position="328"/>
        <end position="330"/>
    </location>
</feature>
<gene>
    <name evidence="1" type="primary">rpoS</name>
    <name type="ordered locus">SF2764</name>
    <name type="ordered locus">S2957</name>
</gene>
<comment type="function">
    <text evidence="1">Sigma factors are initiation factors that promote the attachment of RNA polymerase to specific initiation sites and are then released. This sigma factor is the master transcriptional regulator of the stationary phase and the general stress response.</text>
</comment>
<comment type="subunit">
    <text evidence="1">Interacts with the RNA polymerase core enzyme.</text>
</comment>
<comment type="subcellular location">
    <subcellularLocation>
        <location evidence="1">Cytoplasm</location>
    </subcellularLocation>
</comment>
<comment type="similarity">
    <text evidence="1">Belongs to the sigma-70 factor family. RpoS subfamily.</text>
</comment>
<comment type="sequence caution" evidence="2">
    <conflict type="erroneous initiation">
        <sequence resource="EMBL-CDS" id="AAA03294"/>
    </conflict>
</comment>
<comment type="sequence caution" evidence="2">
    <conflict type="erroneous initiation">
        <sequence resource="EMBL-CDS" id="AAN44253"/>
    </conflict>
</comment>
<comment type="sequence caution" evidence="2">
    <conflict type="frameshift">
        <sequence resource="EMBL" id="AE014073"/>
    </conflict>
</comment>
<keyword id="KW-0963">Cytoplasm</keyword>
<keyword id="KW-0238">DNA-binding</keyword>
<keyword id="KW-1185">Reference proteome</keyword>
<keyword id="KW-0731">Sigma factor</keyword>
<keyword id="KW-0804">Transcription</keyword>
<keyword id="KW-0805">Transcription regulation</keyword>
<evidence type="ECO:0000255" key="1">
    <source>
        <dbReference type="HAMAP-Rule" id="MF_00959"/>
    </source>
</evidence>
<evidence type="ECO:0000305" key="2"/>
<accession>P35540</accession>
<reference key="1">
    <citation type="submission" date="1993-08" db="EMBL/GenBank/DDBJ databases">
        <authorList>
            <person name="Small P.L."/>
            <person name="Slonczewski J."/>
            <person name="Welty D."/>
            <person name="Falkow S."/>
        </authorList>
    </citation>
    <scope>NUCLEOTIDE SEQUENCE [GENOMIC DNA]</scope>
</reference>
<reference key="2">
    <citation type="journal article" date="2002" name="Nucleic Acids Res.">
        <title>Genome sequence of Shigella flexneri 2a: insights into pathogenicity through comparison with genomes of Escherichia coli K12 and O157.</title>
        <authorList>
            <person name="Jin Q."/>
            <person name="Yuan Z."/>
            <person name="Xu J."/>
            <person name="Wang Y."/>
            <person name="Shen Y."/>
            <person name="Lu W."/>
            <person name="Wang J."/>
            <person name="Liu H."/>
            <person name="Yang J."/>
            <person name="Yang F."/>
            <person name="Zhang X."/>
            <person name="Zhang J."/>
            <person name="Yang G."/>
            <person name="Wu H."/>
            <person name="Qu D."/>
            <person name="Dong J."/>
            <person name="Sun L."/>
            <person name="Xue Y."/>
            <person name="Zhao A."/>
            <person name="Gao Y."/>
            <person name="Zhu J."/>
            <person name="Kan B."/>
            <person name="Ding K."/>
            <person name="Chen S."/>
            <person name="Cheng H."/>
            <person name="Yao Z."/>
            <person name="He B."/>
            <person name="Chen R."/>
            <person name="Ma D."/>
            <person name="Qiang B."/>
            <person name="Wen Y."/>
            <person name="Hou Y."/>
            <person name="Yu J."/>
        </authorList>
    </citation>
    <scope>NUCLEOTIDE SEQUENCE [LARGE SCALE GENOMIC DNA]</scope>
    <source>
        <strain>301 / Serotype 2a</strain>
    </source>
</reference>
<reference key="3">
    <citation type="journal article" date="2003" name="Infect. Immun.">
        <title>Complete genome sequence and comparative genomics of Shigella flexneri serotype 2a strain 2457T.</title>
        <authorList>
            <person name="Wei J."/>
            <person name="Goldberg M.B."/>
            <person name="Burland V."/>
            <person name="Venkatesan M.M."/>
            <person name="Deng W."/>
            <person name="Fournier G."/>
            <person name="Mayhew G.F."/>
            <person name="Plunkett G. III"/>
            <person name="Rose D.J."/>
            <person name="Darling A."/>
            <person name="Mau B."/>
            <person name="Perna N.T."/>
            <person name="Payne S.M."/>
            <person name="Runyen-Janecky L.J."/>
            <person name="Zhou S."/>
            <person name="Schwartz D.C."/>
            <person name="Blattner F.R."/>
        </authorList>
    </citation>
    <scope>NUCLEOTIDE SEQUENCE [LARGE SCALE GENOMIC DNA]</scope>
    <source>
        <strain>ATCC 700930 / 2457T / Serotype 2a</strain>
    </source>
</reference>
<organism>
    <name type="scientific">Shigella flexneri</name>
    <dbReference type="NCBI Taxonomy" id="623"/>
    <lineage>
        <taxon>Bacteria</taxon>
        <taxon>Pseudomonadati</taxon>
        <taxon>Pseudomonadota</taxon>
        <taxon>Gammaproteobacteria</taxon>
        <taxon>Enterobacterales</taxon>
        <taxon>Enterobacteriaceae</taxon>
        <taxon>Shigella</taxon>
    </lineage>
</organism>
<sequence length="330" mass="37972">MSQNTLKVHDLNEDAEFDENGVEVFDEKALVEEEPSDNDLAEEELLSQGATQRVLDATQLYLGEIGYSPLLTAEEEVYFARRALRGDVASRRRMIESNLRLVVKIARRYGNRGLALLDLIEEGNLGLIRAVEKFDPERGFRFSTYATWWIRQTIERAIMNQTRTIRLPIHIVKELNVYLRTARELSHKLDHEPSAEEIAEQLDKPVDDVSRMLRLNERITSVDTPLGGDSEKALLDILADEKENGPEDTTQDDDMKQSIVKWLFELNAKQREVLARRFGLLGYEAATLEDVGREIGLTRERVRQIQVEGLRRLREILQTQGLNIEALFRK</sequence>
<protein>
    <recommendedName>
        <fullName evidence="1">RNA polymerase sigma factor RpoS</fullName>
    </recommendedName>
    <alternativeName>
        <fullName evidence="1">Sigma S</fullName>
    </alternativeName>
    <alternativeName>
        <fullName evidence="1">Sigma-38</fullName>
    </alternativeName>
</protein>